<proteinExistence type="inferred from homology"/>
<accession>A9I6G5</accession>
<sequence length="175" mass="18931">MNPYILTPDLNGEGLHIGIVRARFNEEIGQAELDACLQKLGELGVDERDIMVVTVPGALELGVALSHMAETFEFDALIALGAVIRGETYHFEVVSNEMARAISRISLETGIPVANGVLTVDTDEQAQARAAGKGGDCALVAVEMANLVAALEPEEDDEDEDEEDEDFDDEETDRR</sequence>
<evidence type="ECO:0000255" key="1">
    <source>
        <dbReference type="HAMAP-Rule" id="MF_00178"/>
    </source>
</evidence>
<evidence type="ECO:0000256" key="2">
    <source>
        <dbReference type="SAM" id="MobiDB-lite"/>
    </source>
</evidence>
<gene>
    <name evidence="1" type="primary">ribH</name>
    <name type="ordered locus">Bpet3957</name>
</gene>
<organism>
    <name type="scientific">Bordetella petrii (strain ATCC BAA-461 / DSM 12804 / CCUG 43448)</name>
    <dbReference type="NCBI Taxonomy" id="340100"/>
    <lineage>
        <taxon>Bacteria</taxon>
        <taxon>Pseudomonadati</taxon>
        <taxon>Pseudomonadota</taxon>
        <taxon>Betaproteobacteria</taxon>
        <taxon>Burkholderiales</taxon>
        <taxon>Alcaligenaceae</taxon>
        <taxon>Bordetella</taxon>
    </lineage>
</organism>
<name>RISB_BORPD</name>
<reference key="1">
    <citation type="journal article" date="2008" name="BMC Genomics">
        <title>The missing link: Bordetella petrii is endowed with both the metabolic versatility of environmental bacteria and virulence traits of pathogenic Bordetellae.</title>
        <authorList>
            <person name="Gross R."/>
            <person name="Guzman C.A."/>
            <person name="Sebaihia M."/>
            <person name="Martin dos Santos V.A.P."/>
            <person name="Pieper D.H."/>
            <person name="Koebnik R."/>
            <person name="Lechner M."/>
            <person name="Bartels D."/>
            <person name="Buhrmester J."/>
            <person name="Choudhuri J.V."/>
            <person name="Ebensen T."/>
            <person name="Gaigalat L."/>
            <person name="Herrmann S."/>
            <person name="Khachane A.N."/>
            <person name="Larisch C."/>
            <person name="Link S."/>
            <person name="Linke B."/>
            <person name="Meyer F."/>
            <person name="Mormann S."/>
            <person name="Nakunst D."/>
            <person name="Rueckert C."/>
            <person name="Schneiker-Bekel S."/>
            <person name="Schulze K."/>
            <person name="Voerholter F.-J."/>
            <person name="Yevsa T."/>
            <person name="Engle J.T."/>
            <person name="Goldman W.E."/>
            <person name="Puehler A."/>
            <person name="Goebel U.B."/>
            <person name="Goesmann A."/>
            <person name="Bloecker H."/>
            <person name="Kaiser O."/>
            <person name="Martinez-Arias R."/>
        </authorList>
    </citation>
    <scope>NUCLEOTIDE SEQUENCE [LARGE SCALE GENOMIC DNA]</scope>
    <source>
        <strain>ATCC BAA-461 / DSM 12804 / CCUG 43448</strain>
    </source>
</reference>
<protein>
    <recommendedName>
        <fullName evidence="1">6,7-dimethyl-8-ribityllumazine synthase</fullName>
        <shortName evidence="1">DMRL synthase</shortName>
        <shortName evidence="1">LS</shortName>
        <shortName evidence="1">Lumazine synthase</shortName>
        <ecNumber evidence="1">2.5.1.78</ecNumber>
    </recommendedName>
</protein>
<comment type="function">
    <text evidence="1">Catalyzes the formation of 6,7-dimethyl-8-ribityllumazine by condensation of 5-amino-6-(D-ribitylamino)uracil with 3,4-dihydroxy-2-butanone 4-phosphate. This is the penultimate step in the biosynthesis of riboflavin.</text>
</comment>
<comment type="catalytic activity">
    <reaction evidence="1">
        <text>(2S)-2-hydroxy-3-oxobutyl phosphate + 5-amino-6-(D-ribitylamino)uracil = 6,7-dimethyl-8-(1-D-ribityl)lumazine + phosphate + 2 H2O + H(+)</text>
        <dbReference type="Rhea" id="RHEA:26152"/>
        <dbReference type="ChEBI" id="CHEBI:15377"/>
        <dbReference type="ChEBI" id="CHEBI:15378"/>
        <dbReference type="ChEBI" id="CHEBI:15934"/>
        <dbReference type="ChEBI" id="CHEBI:43474"/>
        <dbReference type="ChEBI" id="CHEBI:58201"/>
        <dbReference type="ChEBI" id="CHEBI:58830"/>
        <dbReference type="EC" id="2.5.1.78"/>
    </reaction>
</comment>
<comment type="pathway">
    <text evidence="1">Cofactor biosynthesis; riboflavin biosynthesis; riboflavin from 2-hydroxy-3-oxobutyl phosphate and 5-amino-6-(D-ribitylamino)uracil: step 1/2.</text>
</comment>
<comment type="similarity">
    <text evidence="1">Belongs to the DMRL synthase family.</text>
</comment>
<feature type="chain" id="PRO_1000098163" description="6,7-dimethyl-8-ribityllumazine synthase">
    <location>
        <begin position="1"/>
        <end position="175"/>
    </location>
</feature>
<feature type="region of interest" description="Disordered" evidence="2">
    <location>
        <begin position="151"/>
        <end position="175"/>
    </location>
</feature>
<feature type="compositionally biased region" description="Acidic residues" evidence="2">
    <location>
        <begin position="152"/>
        <end position="175"/>
    </location>
</feature>
<feature type="active site" description="Proton donor" evidence="1">
    <location>
        <position position="90"/>
    </location>
</feature>
<feature type="binding site" evidence="1">
    <location>
        <position position="24"/>
    </location>
    <ligand>
        <name>5-amino-6-(D-ribitylamino)uracil</name>
        <dbReference type="ChEBI" id="CHEBI:15934"/>
    </ligand>
</feature>
<feature type="binding site" evidence="1">
    <location>
        <begin position="58"/>
        <end position="60"/>
    </location>
    <ligand>
        <name>5-amino-6-(D-ribitylamino)uracil</name>
        <dbReference type="ChEBI" id="CHEBI:15934"/>
    </ligand>
</feature>
<feature type="binding site" evidence="1">
    <location>
        <begin position="82"/>
        <end position="84"/>
    </location>
    <ligand>
        <name>5-amino-6-(D-ribitylamino)uracil</name>
        <dbReference type="ChEBI" id="CHEBI:15934"/>
    </ligand>
</feature>
<feature type="binding site" evidence="1">
    <location>
        <begin position="87"/>
        <end position="88"/>
    </location>
    <ligand>
        <name>(2S)-2-hydroxy-3-oxobutyl phosphate</name>
        <dbReference type="ChEBI" id="CHEBI:58830"/>
    </ligand>
</feature>
<feature type="binding site" evidence="1">
    <location>
        <position position="115"/>
    </location>
    <ligand>
        <name>5-amino-6-(D-ribitylamino)uracil</name>
        <dbReference type="ChEBI" id="CHEBI:15934"/>
    </ligand>
</feature>
<feature type="binding site" evidence="1">
    <location>
        <position position="129"/>
    </location>
    <ligand>
        <name>(2S)-2-hydroxy-3-oxobutyl phosphate</name>
        <dbReference type="ChEBI" id="CHEBI:58830"/>
    </ligand>
</feature>
<keyword id="KW-0686">Riboflavin biosynthesis</keyword>
<keyword id="KW-0808">Transferase</keyword>
<dbReference type="EC" id="2.5.1.78" evidence="1"/>
<dbReference type="EMBL" id="AM902716">
    <property type="protein sequence ID" value="CAP44303.1"/>
    <property type="molecule type" value="Genomic_DNA"/>
</dbReference>
<dbReference type="SMR" id="A9I6G5"/>
<dbReference type="STRING" id="94624.Bpet3957"/>
<dbReference type="KEGG" id="bpt:Bpet3957"/>
<dbReference type="eggNOG" id="COG0054">
    <property type="taxonomic scope" value="Bacteria"/>
</dbReference>
<dbReference type="UniPathway" id="UPA00275">
    <property type="reaction ID" value="UER00404"/>
</dbReference>
<dbReference type="Proteomes" id="UP000001225">
    <property type="component" value="Chromosome"/>
</dbReference>
<dbReference type="GO" id="GO:0005829">
    <property type="term" value="C:cytosol"/>
    <property type="evidence" value="ECO:0007669"/>
    <property type="project" value="TreeGrafter"/>
</dbReference>
<dbReference type="GO" id="GO:0009349">
    <property type="term" value="C:riboflavin synthase complex"/>
    <property type="evidence" value="ECO:0007669"/>
    <property type="project" value="InterPro"/>
</dbReference>
<dbReference type="GO" id="GO:0000906">
    <property type="term" value="F:6,7-dimethyl-8-ribityllumazine synthase activity"/>
    <property type="evidence" value="ECO:0007669"/>
    <property type="project" value="UniProtKB-UniRule"/>
</dbReference>
<dbReference type="GO" id="GO:0009231">
    <property type="term" value="P:riboflavin biosynthetic process"/>
    <property type="evidence" value="ECO:0007669"/>
    <property type="project" value="UniProtKB-UniRule"/>
</dbReference>
<dbReference type="CDD" id="cd09209">
    <property type="entry name" value="Lumazine_synthase-I"/>
    <property type="match status" value="1"/>
</dbReference>
<dbReference type="Gene3D" id="3.40.50.960">
    <property type="entry name" value="Lumazine/riboflavin synthase"/>
    <property type="match status" value="1"/>
</dbReference>
<dbReference type="HAMAP" id="MF_00178">
    <property type="entry name" value="Lumazine_synth"/>
    <property type="match status" value="1"/>
</dbReference>
<dbReference type="InterPro" id="IPR034964">
    <property type="entry name" value="LS"/>
</dbReference>
<dbReference type="InterPro" id="IPR002180">
    <property type="entry name" value="LS/RS"/>
</dbReference>
<dbReference type="InterPro" id="IPR036467">
    <property type="entry name" value="LS/RS_sf"/>
</dbReference>
<dbReference type="NCBIfam" id="TIGR00114">
    <property type="entry name" value="lumazine-synth"/>
    <property type="match status" value="1"/>
</dbReference>
<dbReference type="PANTHER" id="PTHR21058:SF0">
    <property type="entry name" value="6,7-DIMETHYL-8-RIBITYLLUMAZINE SYNTHASE"/>
    <property type="match status" value="1"/>
</dbReference>
<dbReference type="PANTHER" id="PTHR21058">
    <property type="entry name" value="6,7-DIMETHYL-8-RIBITYLLUMAZINE SYNTHASE DMRL SYNTHASE LUMAZINE SYNTHASE"/>
    <property type="match status" value="1"/>
</dbReference>
<dbReference type="Pfam" id="PF00885">
    <property type="entry name" value="DMRL_synthase"/>
    <property type="match status" value="1"/>
</dbReference>
<dbReference type="SUPFAM" id="SSF52121">
    <property type="entry name" value="Lumazine synthase"/>
    <property type="match status" value="1"/>
</dbReference>